<comment type="function">
    <text evidence="2">Part of the ABC transporter complex OpuCABCD involved in carnitine uptake. Probably responsible for the translocation of the substrate across the membrane. Involved, with BetL and GbuABC, in osmoprotection and cryoprotection of Listeria.</text>
</comment>
<comment type="subunit">
    <text evidence="4">The complex is composed of two ATP-binding proteins (OpuCA), two transmembrane proteins (OpuCB and OpuCD) and a solute-binding protein (OpuCC).</text>
</comment>
<comment type="subcellular location">
    <subcellularLocation>
        <location evidence="3">Cell membrane</location>
        <topology evidence="1">Multi-pass membrane protein</topology>
    </subcellularLocation>
</comment>
<comment type="similarity">
    <text evidence="3">Belongs to the binding-protein-dependent transport system permease family.</text>
</comment>
<protein>
    <recommendedName>
        <fullName>Carnitine transport permease protein OpuCB</fullName>
    </recommendedName>
</protein>
<evidence type="ECO:0000255" key="1">
    <source>
        <dbReference type="PROSITE-ProRule" id="PRU00441"/>
    </source>
</evidence>
<evidence type="ECO:0000269" key="2">
    <source>
    </source>
</evidence>
<evidence type="ECO:0000305" key="3"/>
<evidence type="ECO:0000305" key="4">
    <source>
    </source>
</evidence>
<gene>
    <name type="primary">opuCB</name>
</gene>
<feature type="chain" id="PRO_0000418134" description="Carnitine transport permease protein OpuCB">
    <location>
        <begin position="1"/>
        <end position="218"/>
    </location>
</feature>
<feature type="transmembrane region" description="Helical" evidence="1">
    <location>
        <begin position="23"/>
        <end position="43"/>
    </location>
</feature>
<feature type="transmembrane region" description="Helical" evidence="1">
    <location>
        <begin position="48"/>
        <end position="68"/>
    </location>
</feature>
<feature type="transmembrane region" description="Helical" evidence="1">
    <location>
        <begin position="79"/>
        <end position="101"/>
    </location>
</feature>
<feature type="transmembrane region" description="Helical" evidence="1">
    <location>
        <begin position="149"/>
        <end position="169"/>
    </location>
</feature>
<feature type="transmembrane region" description="Helical" evidence="1">
    <location>
        <begin position="179"/>
        <end position="199"/>
    </location>
</feature>
<feature type="domain" description="ABC transmembrane type-1" evidence="1">
    <location>
        <begin position="19"/>
        <end position="198"/>
    </location>
</feature>
<accession>Q9KHT8</accession>
<reference key="1">
    <citation type="journal article" date="2000" name="Appl. Environ. Microbiol.">
        <title>Identification and characterization of an ATP binding cassette L-carnitine transporter in Listeria monocytogenes.</title>
        <authorList>
            <person name="Fraser K.R."/>
            <person name="Harvie D."/>
            <person name="Coote P.J."/>
            <person name="O'Byrne C.P."/>
        </authorList>
    </citation>
    <scope>NUCLEOTIDE SEQUENCE [GENOMIC DNA]</scope>
    <scope>FUNCTION</scope>
    <scope>SUBUNIT</scope>
    <source>
        <strain>EGD / Serotype 1/2a</strain>
    </source>
</reference>
<organism>
    <name type="scientific">Listeria monocytogenes</name>
    <dbReference type="NCBI Taxonomy" id="1639"/>
    <lineage>
        <taxon>Bacteria</taxon>
        <taxon>Bacillati</taxon>
        <taxon>Bacillota</taxon>
        <taxon>Bacilli</taxon>
        <taxon>Bacillales</taxon>
        <taxon>Listeriaceae</taxon>
        <taxon>Listeria</taxon>
    </lineage>
</organism>
<sequence>MDAIVTFFQENGHNLLVQTWQHLFISLSAVILGIAVAVPTGILLTRSPKVANFVIGVVSVLQTVPSLAILAFIIPFLGVGTLPAIIALFIYALLPILRNTFIGVRGVDKNLIESGRGMGMTNWQLIVNVEIPNSISVIMAGIRLSAVYVIAWATLASYIGAGGLGDFIFNGLNLYRPDLILGGAIPVTILALVVEFALGKLEYRLTPKAIREAREGGE</sequence>
<dbReference type="EMBL" id="AF249729">
    <property type="protein sequence ID" value="AAF91340.1"/>
    <property type="molecule type" value="Genomic_DNA"/>
</dbReference>
<dbReference type="PIR" id="AC1253">
    <property type="entry name" value="AC1253"/>
</dbReference>
<dbReference type="RefSeq" id="WP_003721932.1">
    <property type="nucleotide sequence ID" value="NZ_WUEB01000003.1"/>
</dbReference>
<dbReference type="SMR" id="Q9KHT8"/>
<dbReference type="eggNOG" id="COG1174">
    <property type="taxonomic scope" value="Bacteria"/>
</dbReference>
<dbReference type="OMA" id="MRYLFTH"/>
<dbReference type="GO" id="GO:0005886">
    <property type="term" value="C:plasma membrane"/>
    <property type="evidence" value="ECO:0007669"/>
    <property type="project" value="UniProtKB-SubCell"/>
</dbReference>
<dbReference type="GO" id="GO:0031460">
    <property type="term" value="P:glycine betaine transport"/>
    <property type="evidence" value="ECO:0007669"/>
    <property type="project" value="TreeGrafter"/>
</dbReference>
<dbReference type="GO" id="GO:0055085">
    <property type="term" value="P:transmembrane transport"/>
    <property type="evidence" value="ECO:0007669"/>
    <property type="project" value="InterPro"/>
</dbReference>
<dbReference type="CDD" id="cd06261">
    <property type="entry name" value="TM_PBP2"/>
    <property type="match status" value="1"/>
</dbReference>
<dbReference type="FunFam" id="1.10.3720.10:FF:000001">
    <property type="entry name" value="Glycine betaine ABC transporter, permease"/>
    <property type="match status" value="1"/>
</dbReference>
<dbReference type="Gene3D" id="1.10.3720.10">
    <property type="entry name" value="MetI-like"/>
    <property type="match status" value="1"/>
</dbReference>
<dbReference type="InterPro" id="IPR051204">
    <property type="entry name" value="ABC_transp_perm/SBD"/>
</dbReference>
<dbReference type="InterPro" id="IPR000515">
    <property type="entry name" value="MetI-like"/>
</dbReference>
<dbReference type="InterPro" id="IPR035906">
    <property type="entry name" value="MetI-like_sf"/>
</dbReference>
<dbReference type="PANTHER" id="PTHR30177:SF28">
    <property type="entry name" value="CHOLINE TRANSPORT SYSTEM PERMEASE PROTEIN OPUBB"/>
    <property type="match status" value="1"/>
</dbReference>
<dbReference type="PANTHER" id="PTHR30177">
    <property type="entry name" value="GLYCINE BETAINE/L-PROLINE TRANSPORT SYSTEM PERMEASE PROTEIN PROW"/>
    <property type="match status" value="1"/>
</dbReference>
<dbReference type="Pfam" id="PF00528">
    <property type="entry name" value="BPD_transp_1"/>
    <property type="match status" value="1"/>
</dbReference>
<dbReference type="SUPFAM" id="SSF161098">
    <property type="entry name" value="MetI-like"/>
    <property type="match status" value="1"/>
</dbReference>
<dbReference type="PROSITE" id="PS50928">
    <property type="entry name" value="ABC_TM1"/>
    <property type="match status" value="1"/>
</dbReference>
<proteinExistence type="evidence at protein level"/>
<keyword id="KW-1003">Cell membrane</keyword>
<keyword id="KW-0472">Membrane</keyword>
<keyword id="KW-0346">Stress response</keyword>
<keyword id="KW-0812">Transmembrane</keyword>
<keyword id="KW-1133">Transmembrane helix</keyword>
<keyword id="KW-0813">Transport</keyword>
<name>OPUCB_LISMN</name>